<proteinExistence type="evidence at protein level"/>
<gene>
    <name evidence="9" type="primary">CBLL1</name>
    <name evidence="7" type="synonym">HAKAI</name>
    <name type="synonym">RNF188</name>
</gene>
<organism>
    <name type="scientific">Homo sapiens</name>
    <name type="common">Human</name>
    <dbReference type="NCBI Taxonomy" id="9606"/>
    <lineage>
        <taxon>Eukaryota</taxon>
        <taxon>Metazoa</taxon>
        <taxon>Chordata</taxon>
        <taxon>Craniata</taxon>
        <taxon>Vertebrata</taxon>
        <taxon>Euteleostomi</taxon>
        <taxon>Mammalia</taxon>
        <taxon>Eutheria</taxon>
        <taxon>Euarchontoglires</taxon>
        <taxon>Primates</taxon>
        <taxon>Haplorrhini</taxon>
        <taxon>Catarrhini</taxon>
        <taxon>Hominidae</taxon>
        <taxon>Homo</taxon>
    </lineage>
</organism>
<protein>
    <recommendedName>
        <fullName evidence="8">E3 ubiquitin-protein ligase Hakai</fullName>
        <ecNumber evidence="1">2.3.2.27</ecNumber>
    </recommendedName>
    <alternativeName>
        <fullName evidence="1">Casitas B-lineage lymphoma-transforming sequence-like protein 1</fullName>
        <shortName evidence="1">c-Cbl-like protein 1</shortName>
    </alternativeName>
    <alternativeName>
        <fullName>RING finger protein 188</fullName>
    </alternativeName>
    <alternativeName>
        <fullName evidence="8">RING-type E3 ubiquitin transferase Hakai</fullName>
    </alternativeName>
</protein>
<reference key="1">
    <citation type="journal article" date="2004" name="Nat. Genet.">
        <title>Complete sequencing and characterization of 21,243 full-length human cDNAs.</title>
        <authorList>
            <person name="Ota T."/>
            <person name="Suzuki Y."/>
            <person name="Nishikawa T."/>
            <person name="Otsuki T."/>
            <person name="Sugiyama T."/>
            <person name="Irie R."/>
            <person name="Wakamatsu A."/>
            <person name="Hayashi K."/>
            <person name="Sato H."/>
            <person name="Nagai K."/>
            <person name="Kimura K."/>
            <person name="Makita H."/>
            <person name="Sekine M."/>
            <person name="Obayashi M."/>
            <person name="Nishi T."/>
            <person name="Shibahara T."/>
            <person name="Tanaka T."/>
            <person name="Ishii S."/>
            <person name="Yamamoto J."/>
            <person name="Saito K."/>
            <person name="Kawai Y."/>
            <person name="Isono Y."/>
            <person name="Nakamura Y."/>
            <person name="Nagahari K."/>
            <person name="Murakami K."/>
            <person name="Yasuda T."/>
            <person name="Iwayanagi T."/>
            <person name="Wagatsuma M."/>
            <person name="Shiratori A."/>
            <person name="Sudo H."/>
            <person name="Hosoiri T."/>
            <person name="Kaku Y."/>
            <person name="Kodaira H."/>
            <person name="Kondo H."/>
            <person name="Sugawara M."/>
            <person name="Takahashi M."/>
            <person name="Kanda K."/>
            <person name="Yokoi T."/>
            <person name="Furuya T."/>
            <person name="Kikkawa E."/>
            <person name="Omura Y."/>
            <person name="Abe K."/>
            <person name="Kamihara K."/>
            <person name="Katsuta N."/>
            <person name="Sato K."/>
            <person name="Tanikawa M."/>
            <person name="Yamazaki M."/>
            <person name="Ninomiya K."/>
            <person name="Ishibashi T."/>
            <person name="Yamashita H."/>
            <person name="Murakawa K."/>
            <person name="Fujimori K."/>
            <person name="Tanai H."/>
            <person name="Kimata M."/>
            <person name="Watanabe M."/>
            <person name="Hiraoka S."/>
            <person name="Chiba Y."/>
            <person name="Ishida S."/>
            <person name="Ono Y."/>
            <person name="Takiguchi S."/>
            <person name="Watanabe S."/>
            <person name="Yosida M."/>
            <person name="Hotuta T."/>
            <person name="Kusano J."/>
            <person name="Kanehori K."/>
            <person name="Takahashi-Fujii A."/>
            <person name="Hara H."/>
            <person name="Tanase T.-O."/>
            <person name="Nomura Y."/>
            <person name="Togiya S."/>
            <person name="Komai F."/>
            <person name="Hara R."/>
            <person name="Takeuchi K."/>
            <person name="Arita M."/>
            <person name="Imose N."/>
            <person name="Musashino K."/>
            <person name="Yuuki H."/>
            <person name="Oshima A."/>
            <person name="Sasaki N."/>
            <person name="Aotsuka S."/>
            <person name="Yoshikawa Y."/>
            <person name="Matsunawa H."/>
            <person name="Ichihara T."/>
            <person name="Shiohata N."/>
            <person name="Sano S."/>
            <person name="Moriya S."/>
            <person name="Momiyama H."/>
            <person name="Satoh N."/>
            <person name="Takami S."/>
            <person name="Terashima Y."/>
            <person name="Suzuki O."/>
            <person name="Nakagawa S."/>
            <person name="Senoh A."/>
            <person name="Mizoguchi H."/>
            <person name="Goto Y."/>
            <person name="Shimizu F."/>
            <person name="Wakebe H."/>
            <person name="Hishigaki H."/>
            <person name="Watanabe T."/>
            <person name="Sugiyama A."/>
            <person name="Takemoto M."/>
            <person name="Kawakami B."/>
            <person name="Yamazaki M."/>
            <person name="Watanabe K."/>
            <person name="Kumagai A."/>
            <person name="Itakura S."/>
            <person name="Fukuzumi Y."/>
            <person name="Fujimori Y."/>
            <person name="Komiyama M."/>
            <person name="Tashiro H."/>
            <person name="Tanigami A."/>
            <person name="Fujiwara T."/>
            <person name="Ono T."/>
            <person name="Yamada K."/>
            <person name="Fujii Y."/>
            <person name="Ozaki K."/>
            <person name="Hirao M."/>
            <person name="Ohmori Y."/>
            <person name="Kawabata A."/>
            <person name="Hikiji T."/>
            <person name="Kobatake N."/>
            <person name="Inagaki H."/>
            <person name="Ikema Y."/>
            <person name="Okamoto S."/>
            <person name="Okitani R."/>
            <person name="Kawakami T."/>
            <person name="Noguchi S."/>
            <person name="Itoh T."/>
            <person name="Shigeta K."/>
            <person name="Senba T."/>
            <person name="Matsumura K."/>
            <person name="Nakajima Y."/>
            <person name="Mizuno T."/>
            <person name="Morinaga M."/>
            <person name="Sasaki M."/>
            <person name="Togashi T."/>
            <person name="Oyama M."/>
            <person name="Hata H."/>
            <person name="Watanabe M."/>
            <person name="Komatsu T."/>
            <person name="Mizushima-Sugano J."/>
            <person name="Satoh T."/>
            <person name="Shirai Y."/>
            <person name="Takahashi Y."/>
            <person name="Nakagawa K."/>
            <person name="Okumura K."/>
            <person name="Nagase T."/>
            <person name="Nomura N."/>
            <person name="Kikuchi H."/>
            <person name="Masuho Y."/>
            <person name="Yamashita R."/>
            <person name="Nakai K."/>
            <person name="Yada T."/>
            <person name="Nakamura Y."/>
            <person name="Ohara O."/>
            <person name="Isogai T."/>
            <person name="Sugano S."/>
        </authorList>
    </citation>
    <scope>NUCLEOTIDE SEQUENCE [LARGE SCALE MRNA] (ISOFORM 1)</scope>
    <source>
        <tissue>Lung</tissue>
    </source>
</reference>
<reference key="2">
    <citation type="journal article" date="2003" name="Nature">
        <title>The DNA sequence of human chromosome 7.</title>
        <authorList>
            <person name="Hillier L.W."/>
            <person name="Fulton R.S."/>
            <person name="Fulton L.A."/>
            <person name="Graves T.A."/>
            <person name="Pepin K.H."/>
            <person name="Wagner-McPherson C."/>
            <person name="Layman D."/>
            <person name="Maas J."/>
            <person name="Jaeger S."/>
            <person name="Walker R."/>
            <person name="Wylie K."/>
            <person name="Sekhon M."/>
            <person name="Becker M.C."/>
            <person name="O'Laughlin M.D."/>
            <person name="Schaller M.E."/>
            <person name="Fewell G.A."/>
            <person name="Delehaunty K.D."/>
            <person name="Miner T.L."/>
            <person name="Nash W.E."/>
            <person name="Cordes M."/>
            <person name="Du H."/>
            <person name="Sun H."/>
            <person name="Edwards J."/>
            <person name="Bradshaw-Cordum H."/>
            <person name="Ali J."/>
            <person name="Andrews S."/>
            <person name="Isak A."/>
            <person name="Vanbrunt A."/>
            <person name="Nguyen C."/>
            <person name="Du F."/>
            <person name="Lamar B."/>
            <person name="Courtney L."/>
            <person name="Kalicki J."/>
            <person name="Ozersky P."/>
            <person name="Bielicki L."/>
            <person name="Scott K."/>
            <person name="Holmes A."/>
            <person name="Harkins R."/>
            <person name="Harris A."/>
            <person name="Strong C.M."/>
            <person name="Hou S."/>
            <person name="Tomlinson C."/>
            <person name="Dauphin-Kohlberg S."/>
            <person name="Kozlowicz-Reilly A."/>
            <person name="Leonard S."/>
            <person name="Rohlfing T."/>
            <person name="Rock S.M."/>
            <person name="Tin-Wollam A.-M."/>
            <person name="Abbott A."/>
            <person name="Minx P."/>
            <person name="Maupin R."/>
            <person name="Strowmatt C."/>
            <person name="Latreille P."/>
            <person name="Miller N."/>
            <person name="Johnson D."/>
            <person name="Murray J."/>
            <person name="Woessner J.P."/>
            <person name="Wendl M.C."/>
            <person name="Yang S.-P."/>
            <person name="Schultz B.R."/>
            <person name="Wallis J.W."/>
            <person name="Spieth J."/>
            <person name="Bieri T.A."/>
            <person name="Nelson J.O."/>
            <person name="Berkowicz N."/>
            <person name="Wohldmann P.E."/>
            <person name="Cook L.L."/>
            <person name="Hickenbotham M.T."/>
            <person name="Eldred J."/>
            <person name="Williams D."/>
            <person name="Bedell J.A."/>
            <person name="Mardis E.R."/>
            <person name="Clifton S.W."/>
            <person name="Chissoe S.L."/>
            <person name="Marra M.A."/>
            <person name="Raymond C."/>
            <person name="Haugen E."/>
            <person name="Gillett W."/>
            <person name="Zhou Y."/>
            <person name="James R."/>
            <person name="Phelps K."/>
            <person name="Iadanoto S."/>
            <person name="Bubb K."/>
            <person name="Simms E."/>
            <person name="Levy R."/>
            <person name="Clendenning J."/>
            <person name="Kaul R."/>
            <person name="Kent W.J."/>
            <person name="Furey T.S."/>
            <person name="Baertsch R.A."/>
            <person name="Brent M.R."/>
            <person name="Keibler E."/>
            <person name="Flicek P."/>
            <person name="Bork P."/>
            <person name="Suyama M."/>
            <person name="Bailey J.A."/>
            <person name="Portnoy M.E."/>
            <person name="Torrents D."/>
            <person name="Chinwalla A.T."/>
            <person name="Gish W.R."/>
            <person name="Eddy S.R."/>
            <person name="McPherson J.D."/>
            <person name="Olson M.V."/>
            <person name="Eichler E.E."/>
            <person name="Green E.D."/>
            <person name="Waterston R.H."/>
            <person name="Wilson R.K."/>
        </authorList>
    </citation>
    <scope>NUCLEOTIDE SEQUENCE [LARGE SCALE GENOMIC DNA]</scope>
</reference>
<reference key="3">
    <citation type="journal article" date="2004" name="Genome Res.">
        <title>The status, quality, and expansion of the NIH full-length cDNA project: the Mammalian Gene Collection (MGC).</title>
        <authorList>
            <consortium name="The MGC Project Team"/>
        </authorList>
    </citation>
    <scope>NUCLEOTIDE SEQUENCE [LARGE SCALE MRNA] (ISOFORMS 1 AND 2)</scope>
    <source>
        <tissue>Testis</tissue>
    </source>
</reference>
<reference key="4">
    <citation type="journal article" date="2008" name="Proc. Natl. Acad. Sci. U.S.A.">
        <title>A quantitative atlas of mitotic phosphorylation.</title>
        <authorList>
            <person name="Dephoure N."/>
            <person name="Zhou C."/>
            <person name="Villen J."/>
            <person name="Beausoleil S.A."/>
            <person name="Bakalarski C.E."/>
            <person name="Elledge S.J."/>
            <person name="Gygi S.P."/>
        </authorList>
    </citation>
    <scope>PHOSPHORYLATION [LARGE SCALE ANALYSIS] AT SER-201</scope>
    <scope>IDENTIFICATION BY MASS SPECTROMETRY [LARGE SCALE ANALYSIS]</scope>
    <source>
        <tissue>Cervix carcinoma</tissue>
    </source>
</reference>
<reference key="5">
    <citation type="journal article" date="2009" name="Sci. Signal.">
        <title>Quantitative phosphoproteomic analysis of T cell receptor signaling reveals system-wide modulation of protein-protein interactions.</title>
        <authorList>
            <person name="Mayya V."/>
            <person name="Lundgren D.H."/>
            <person name="Hwang S.-I."/>
            <person name="Rezaul K."/>
            <person name="Wu L."/>
            <person name="Eng J.K."/>
            <person name="Rodionov V."/>
            <person name="Han D.K."/>
        </authorList>
    </citation>
    <scope>PHOSPHORYLATION [LARGE SCALE ANALYSIS] AT SER-290</scope>
    <scope>IDENTIFICATION BY MASS SPECTROMETRY [LARGE SCALE ANALYSIS]</scope>
    <source>
        <tissue>Leukemic T-cell</tissue>
    </source>
</reference>
<reference key="6">
    <citation type="journal article" date="2013" name="J. Biol. Chem.">
        <title>Identification of Wilms' tumor 1-associating protein complex and its role in alternative splicing and the cell cycle.</title>
        <authorList>
            <person name="Horiuchi K."/>
            <person name="Kawamura T."/>
            <person name="Iwanari H."/>
            <person name="Ohashi R."/>
            <person name="Naito M."/>
            <person name="Kodama T."/>
            <person name="Hamakubo T."/>
        </authorList>
    </citation>
    <scope>IDENTIFICATION IN A MACOM-LIKE COMPLEX</scope>
    <scope>SUBCELLULAR LOCATION</scope>
</reference>
<reference key="7">
    <citation type="journal article" date="2013" name="J. Proteome Res.">
        <title>Toward a comprehensive characterization of a human cancer cell phosphoproteome.</title>
        <authorList>
            <person name="Zhou H."/>
            <person name="Di Palma S."/>
            <person name="Preisinger C."/>
            <person name="Peng M."/>
            <person name="Polat A.N."/>
            <person name="Heck A.J."/>
            <person name="Mohammed S."/>
        </authorList>
    </citation>
    <scope>PHOSPHORYLATION [LARGE SCALE ANALYSIS] AT SER-285</scope>
    <scope>IDENTIFICATION BY MASS SPECTROMETRY [LARGE SCALE ANALYSIS]</scope>
    <source>
        <tissue>Erythroleukemia</tissue>
    </source>
</reference>
<reference key="8">
    <citation type="journal article" date="2018" name="Cell Discov.">
        <title>VIRMA mediates preferential m6A mRNA methylation in 3'UTR and near stop codon and associates with alternative polyadenylation.</title>
        <authorList>
            <person name="Yue Y."/>
            <person name="Liu J."/>
            <person name="Cui X."/>
            <person name="Cao J."/>
            <person name="Luo G."/>
            <person name="Zhang Z."/>
            <person name="Cheng T."/>
            <person name="Gao M."/>
            <person name="Shu X."/>
            <person name="Ma H."/>
            <person name="Wang F."/>
            <person name="Wang X."/>
            <person name="Shen B."/>
            <person name="Wang Y."/>
            <person name="Feng X."/>
            <person name="He C."/>
            <person name="Liu J."/>
        </authorList>
    </citation>
    <scope>FUNCTION</scope>
    <scope>IDENTIFICATION IN THE WMM COMPLEX</scope>
</reference>
<comment type="function">
    <text evidence="1 5">E3 ubiquitin-protein ligase that mediates ubiquitination of several tyrosine-phosphorylated Src substrates, including CDH1, CTTN and DOK1 (By similarity). Targets CDH1 for endocytosis and degradation (By similarity). Associated component of the WMM complex, a complex that mediates N6-methyladenosine (m6A) methylation of RNAs, a modification that plays a role in the efficiency of mRNA splicing and RNA processing (PubMed:29507755). Its function in the WMM complex is unknown (PubMed:29507755).</text>
</comment>
<comment type="catalytic activity">
    <reaction evidence="1">
        <text>S-ubiquitinyl-[E2 ubiquitin-conjugating enzyme]-L-cysteine + [acceptor protein]-L-lysine = [E2 ubiquitin-conjugating enzyme]-L-cysteine + N(6)-ubiquitinyl-[acceptor protein]-L-lysine.</text>
        <dbReference type="EC" id="2.3.2.27"/>
    </reaction>
</comment>
<comment type="pathway">
    <text evidence="1">Protein modification; protein ubiquitination.</text>
</comment>
<comment type="subunit">
    <text evidence="1 4 5">Homodimer (By similarity). Interacts with tyrosine-phosphorylated SRC substrates (By similarity). Component of the WMM complex, a N6-methyltransferase complex composed of a catalytic subcomplex, named MAC, and of an associated subcomplex, named MACOM (PubMed:29507755). The MAC subcomplex is composed of METTL3 and METTL14 (PubMed:29507755). The MACOM subcomplex is composed of WTAP, ZC3H13, CBLL1/HAKAI, VIRMA, and, in some cases of RBM15 (RBM15 or RBM15B) (PubMed:29507755). Also a component of a MACOM-like complex, named WTAP complex, composed of WTAP, ZC3H13, CBLL1, VIRMA, RBM15, BCLAF1 and THRAP3 (PubMed:24100041).</text>
</comment>
<comment type="interaction">
    <interactant intactId="EBI-2832762">
        <id>Q75N03</id>
    </interactant>
    <interactant intactId="EBI-721525">
        <id>P98175</id>
        <label>RBM10</label>
    </interactant>
    <organismsDiffer>false</organismsDiffer>
    <experiments>3</experiments>
</comment>
<comment type="subcellular location">
    <subcellularLocation>
        <location evidence="4">Nucleus speckle</location>
    </subcellularLocation>
    <subcellularLocation>
        <location evidence="4">Nucleus</location>
        <location evidence="4">Nucleoplasm</location>
    </subcellularLocation>
    <subcellularLocation>
        <location evidence="1">Cytoplasm</location>
    </subcellularLocation>
    <text evidence="1">Mainly nuclear with some fraction located in the cytoplasm. ZC3H13 is required to anchor component of the MACOM subcomplex, such as VIRMA, in the nucleus.</text>
</comment>
<comment type="alternative products">
    <event type="alternative splicing"/>
    <isoform>
        <id>Q75N03-1</id>
        <name>1</name>
        <sequence type="displayed"/>
    </isoform>
    <isoform>
        <id>Q75N03-2</id>
        <name>2</name>
        <sequence type="described" ref="VSP_054879"/>
    </isoform>
</comment>
<comment type="domain">
    <text evidence="1">The HYB domain forms a phosphotyrosine-binding pocket upon dimerization, and mediates as well the recognition of its flanking acidic amino acids.</text>
</comment>
<comment type="PTM">
    <text evidence="1">Phosphorylated on tyrosine residues.</text>
</comment>
<comment type="similarity">
    <text evidence="8">Belongs to the Hakai family.</text>
</comment>
<keyword id="KW-0025">Alternative splicing</keyword>
<keyword id="KW-0963">Cytoplasm</keyword>
<keyword id="KW-0217">Developmental protein</keyword>
<keyword id="KW-0479">Metal-binding</keyword>
<keyword id="KW-0539">Nucleus</keyword>
<keyword id="KW-0597">Phosphoprotein</keyword>
<keyword id="KW-1267">Proteomics identification</keyword>
<keyword id="KW-1185">Reference proteome</keyword>
<keyword id="KW-0808">Transferase</keyword>
<keyword id="KW-0833">Ubl conjugation pathway</keyword>
<keyword id="KW-0862">Zinc</keyword>
<keyword id="KW-0863">Zinc-finger</keyword>
<dbReference type="EC" id="2.3.2.27" evidence="1"/>
<dbReference type="EMBL" id="AK026762">
    <property type="protein sequence ID" value="BAB15544.1"/>
    <property type="molecule type" value="mRNA"/>
</dbReference>
<dbReference type="EMBL" id="AC002467">
    <property type="protein sequence ID" value="AAS07390.1"/>
    <property type="molecule type" value="Genomic_DNA"/>
</dbReference>
<dbReference type="EMBL" id="BC027460">
    <property type="protein sequence ID" value="AAH27460.2"/>
    <property type="molecule type" value="mRNA"/>
</dbReference>
<dbReference type="EMBL" id="BC130529">
    <property type="protein sequence ID" value="AAI30530.1"/>
    <property type="molecule type" value="mRNA"/>
</dbReference>
<dbReference type="EMBL" id="BC130531">
    <property type="protein sequence ID" value="AAI30532.1"/>
    <property type="molecule type" value="mRNA"/>
</dbReference>
<dbReference type="EMBL" id="BC144176">
    <property type="protein sequence ID" value="AAI44177.1"/>
    <property type="molecule type" value="mRNA"/>
</dbReference>
<dbReference type="CCDS" id="CCDS5747.1">
    <molecule id="Q75N03-1"/>
</dbReference>
<dbReference type="CCDS" id="CCDS64754.1">
    <molecule id="Q75N03-2"/>
</dbReference>
<dbReference type="RefSeq" id="NP_001271220.1">
    <molecule id="Q75N03-2"/>
    <property type="nucleotide sequence ID" value="NM_001284291.2"/>
</dbReference>
<dbReference type="RefSeq" id="NP_079090.2">
    <molecule id="Q75N03-1"/>
    <property type="nucleotide sequence ID" value="NM_024814.4"/>
</dbReference>
<dbReference type="BMRB" id="Q75N03"/>
<dbReference type="SMR" id="Q75N03"/>
<dbReference type="BioGRID" id="122960">
    <property type="interactions" value="74"/>
</dbReference>
<dbReference type="ComplexPortal" id="CPX-1605">
    <property type="entry name" value="WMM N6-adenosine-methyltransferase complex"/>
</dbReference>
<dbReference type="CORUM" id="Q75N03"/>
<dbReference type="FunCoup" id="Q75N03">
    <property type="interactions" value="3307"/>
</dbReference>
<dbReference type="IntAct" id="Q75N03">
    <property type="interactions" value="49"/>
</dbReference>
<dbReference type="MINT" id="Q75N03"/>
<dbReference type="STRING" id="9606.ENSP00000401277"/>
<dbReference type="GlyCosmos" id="Q75N03">
    <property type="glycosylation" value="2 sites, 1 glycan"/>
</dbReference>
<dbReference type="GlyGen" id="Q75N03">
    <property type="glycosylation" value="3 sites, 1 O-linked glycan (2 sites)"/>
</dbReference>
<dbReference type="iPTMnet" id="Q75N03"/>
<dbReference type="MetOSite" id="Q75N03"/>
<dbReference type="PhosphoSitePlus" id="Q75N03"/>
<dbReference type="BioMuta" id="CBLL1"/>
<dbReference type="DMDM" id="74762414"/>
<dbReference type="jPOST" id="Q75N03"/>
<dbReference type="MassIVE" id="Q75N03"/>
<dbReference type="PaxDb" id="9606-ENSP00000401277"/>
<dbReference type="PeptideAtlas" id="Q75N03"/>
<dbReference type="ProteomicsDB" id="68642">
    <molecule id="Q75N03-1"/>
</dbReference>
<dbReference type="ProteomicsDB" id="7243"/>
<dbReference type="Pumba" id="Q75N03"/>
<dbReference type="Antibodypedia" id="17227">
    <property type="antibodies" value="208 antibodies from 30 providers"/>
</dbReference>
<dbReference type="DNASU" id="79872"/>
<dbReference type="Ensembl" id="ENST00000222597.7">
    <molecule id="Q75N03-2"/>
    <property type="protein sequence ID" value="ENSP00000222597.2"/>
    <property type="gene ID" value="ENSG00000105879.13"/>
</dbReference>
<dbReference type="Ensembl" id="ENST00000440859.8">
    <molecule id="Q75N03-1"/>
    <property type="protein sequence ID" value="ENSP00000401277.2"/>
    <property type="gene ID" value="ENSG00000105879.13"/>
</dbReference>
<dbReference type="GeneID" id="79872"/>
<dbReference type="KEGG" id="hsa:79872"/>
<dbReference type="MANE-Select" id="ENST00000440859.8">
    <property type="protein sequence ID" value="ENSP00000401277.2"/>
    <property type="RefSeq nucleotide sequence ID" value="NM_024814.4"/>
    <property type="RefSeq protein sequence ID" value="NP_079090.2"/>
</dbReference>
<dbReference type="UCSC" id="uc003veq.4">
    <molecule id="Q75N03-1"/>
    <property type="organism name" value="human"/>
</dbReference>
<dbReference type="AGR" id="HGNC:21225"/>
<dbReference type="CTD" id="79872"/>
<dbReference type="DisGeNET" id="79872"/>
<dbReference type="GeneCards" id="CBLL1"/>
<dbReference type="HGNC" id="HGNC:21225">
    <property type="gene designation" value="CBLL1"/>
</dbReference>
<dbReference type="HPA" id="ENSG00000105879">
    <property type="expression patterns" value="Low tissue specificity"/>
</dbReference>
<dbReference type="MIM" id="606872">
    <property type="type" value="gene"/>
</dbReference>
<dbReference type="neXtProt" id="NX_Q75N03"/>
<dbReference type="OpenTargets" id="ENSG00000105879"/>
<dbReference type="PharmGKB" id="PA134960329"/>
<dbReference type="VEuPathDB" id="HostDB:ENSG00000105879"/>
<dbReference type="eggNOG" id="KOG2932">
    <property type="taxonomic scope" value="Eukaryota"/>
</dbReference>
<dbReference type="GeneTree" id="ENSGT00510000047522"/>
<dbReference type="HOGENOM" id="CLU_031291_1_0_1"/>
<dbReference type="InParanoid" id="Q75N03"/>
<dbReference type="OMA" id="HLPPKQH"/>
<dbReference type="OrthoDB" id="547746at2759"/>
<dbReference type="PAN-GO" id="Q75N03">
    <property type="GO annotations" value="3 GO annotations based on evolutionary models"/>
</dbReference>
<dbReference type="PhylomeDB" id="Q75N03"/>
<dbReference type="TreeFam" id="TF332910"/>
<dbReference type="PathwayCommons" id="Q75N03"/>
<dbReference type="Reactome" id="R-HSA-8876493">
    <property type="pathway name" value="InlA-mediated entry of Listeria monocytogenes into host cells"/>
</dbReference>
<dbReference type="SignaLink" id="Q75N03"/>
<dbReference type="SIGNOR" id="Q75N03"/>
<dbReference type="UniPathway" id="UPA00143"/>
<dbReference type="BioGRID-ORCS" id="79872">
    <property type="hits" value="201 hits in 1198 CRISPR screens"/>
</dbReference>
<dbReference type="CD-CODE" id="804901D1">
    <property type="entry name" value="Nuclear speckle"/>
</dbReference>
<dbReference type="GeneWiki" id="CBLL1"/>
<dbReference type="GenomeRNAi" id="79872"/>
<dbReference type="Pharos" id="Q75N03">
    <property type="development level" value="Tbio"/>
</dbReference>
<dbReference type="PRO" id="PR:Q75N03"/>
<dbReference type="Proteomes" id="UP000005640">
    <property type="component" value="Chromosome 7"/>
</dbReference>
<dbReference type="RNAct" id="Q75N03">
    <property type="molecule type" value="protein"/>
</dbReference>
<dbReference type="Bgee" id="ENSG00000105879">
    <property type="expression patterns" value="Expressed in calcaneal tendon and 177 other cell types or tissues"/>
</dbReference>
<dbReference type="ExpressionAtlas" id="Q75N03">
    <property type="expression patterns" value="baseline and differential"/>
</dbReference>
<dbReference type="GO" id="GO:0005737">
    <property type="term" value="C:cytoplasm"/>
    <property type="evidence" value="ECO:0000250"/>
    <property type="project" value="UniProtKB"/>
</dbReference>
<dbReference type="GO" id="GO:0005829">
    <property type="term" value="C:cytosol"/>
    <property type="evidence" value="ECO:0000304"/>
    <property type="project" value="Reactome"/>
</dbReference>
<dbReference type="GO" id="GO:0016607">
    <property type="term" value="C:nuclear speck"/>
    <property type="evidence" value="ECO:0000314"/>
    <property type="project" value="HPA"/>
</dbReference>
<dbReference type="GO" id="GO:0005634">
    <property type="term" value="C:nucleus"/>
    <property type="evidence" value="ECO:0000303"/>
    <property type="project" value="ComplexPortal"/>
</dbReference>
<dbReference type="GO" id="GO:0036396">
    <property type="term" value="C:RNA N6-methyladenosine methyltransferase complex"/>
    <property type="evidence" value="ECO:0000314"/>
    <property type="project" value="UniProtKB"/>
</dbReference>
<dbReference type="GO" id="GO:0000151">
    <property type="term" value="C:ubiquitin ligase complex"/>
    <property type="evidence" value="ECO:0000305"/>
    <property type="project" value="UniProtKB"/>
</dbReference>
<dbReference type="GO" id="GO:0042802">
    <property type="term" value="F:identical protein binding"/>
    <property type="evidence" value="ECO:0007669"/>
    <property type="project" value="Ensembl"/>
</dbReference>
<dbReference type="GO" id="GO:0061630">
    <property type="term" value="F:ubiquitin protein ligase activity"/>
    <property type="evidence" value="ECO:0000318"/>
    <property type="project" value="GO_Central"/>
</dbReference>
<dbReference type="GO" id="GO:0004842">
    <property type="term" value="F:ubiquitin-protein transferase activity"/>
    <property type="evidence" value="ECO:0000250"/>
    <property type="project" value="UniProtKB"/>
</dbReference>
<dbReference type="GO" id="GO:0008270">
    <property type="term" value="F:zinc ion binding"/>
    <property type="evidence" value="ECO:0007669"/>
    <property type="project" value="UniProtKB-KW"/>
</dbReference>
<dbReference type="GO" id="GO:0098609">
    <property type="term" value="P:cell-cell adhesion"/>
    <property type="evidence" value="ECO:0000314"/>
    <property type="project" value="UniProtKB"/>
</dbReference>
<dbReference type="GO" id="GO:0006397">
    <property type="term" value="P:mRNA processing"/>
    <property type="evidence" value="ECO:0000315"/>
    <property type="project" value="UniProtKB"/>
</dbReference>
<dbReference type="GO" id="GO:0007162">
    <property type="term" value="P:negative regulation of cell adhesion"/>
    <property type="evidence" value="ECO:0000250"/>
    <property type="project" value="UniProtKB"/>
</dbReference>
<dbReference type="GO" id="GO:0030335">
    <property type="term" value="P:positive regulation of cell migration"/>
    <property type="evidence" value="ECO:0000250"/>
    <property type="project" value="UniProtKB"/>
</dbReference>
<dbReference type="GO" id="GO:0045807">
    <property type="term" value="P:positive regulation of endocytosis"/>
    <property type="evidence" value="ECO:0000250"/>
    <property type="project" value="UniProtKB"/>
</dbReference>
<dbReference type="GO" id="GO:0016567">
    <property type="term" value="P:protein ubiquitination"/>
    <property type="evidence" value="ECO:0000318"/>
    <property type="project" value="GO_Central"/>
</dbReference>
<dbReference type="GO" id="GO:0030155">
    <property type="term" value="P:regulation of cell adhesion"/>
    <property type="evidence" value="ECO:0000318"/>
    <property type="project" value="GO_Central"/>
</dbReference>
<dbReference type="CDD" id="cd16508">
    <property type="entry name" value="RING-HC_HAKAI-like"/>
    <property type="match status" value="1"/>
</dbReference>
<dbReference type="FunFam" id="3.30.40.10:FF:000140">
    <property type="entry name" value="E3 ubiquitin-protein ligase Hakai isoform X2"/>
    <property type="match status" value="1"/>
</dbReference>
<dbReference type="FunFam" id="6.10.140.2210:FF:000001">
    <property type="entry name" value="Putative e3 ubiquitin-protein ligase hakai"/>
    <property type="match status" value="1"/>
</dbReference>
<dbReference type="Gene3D" id="6.10.140.2210">
    <property type="match status" value="1"/>
</dbReference>
<dbReference type="Gene3D" id="3.30.40.10">
    <property type="entry name" value="Zinc/RING finger domain, C3HC4 (zinc finger)"/>
    <property type="match status" value="1"/>
</dbReference>
<dbReference type="InterPro" id="IPR040380">
    <property type="entry name" value="HAKAI-like_RING-HC"/>
</dbReference>
<dbReference type="InterPro" id="IPR040383">
    <property type="entry name" value="HAKAI/CBLL2"/>
</dbReference>
<dbReference type="InterPro" id="IPR041042">
    <property type="entry name" value="Znf_Hakai"/>
</dbReference>
<dbReference type="InterPro" id="IPR001841">
    <property type="entry name" value="Znf_RING"/>
</dbReference>
<dbReference type="InterPro" id="IPR013083">
    <property type="entry name" value="Znf_RING/FYVE/PHD"/>
</dbReference>
<dbReference type="InterPro" id="IPR017907">
    <property type="entry name" value="Znf_RING_CS"/>
</dbReference>
<dbReference type="PANTHER" id="PTHR13480:SF2">
    <property type="entry name" value="E3 UBIQUITIN-PROTEIN LIGASE HAKAI"/>
    <property type="match status" value="1"/>
</dbReference>
<dbReference type="PANTHER" id="PTHR13480">
    <property type="entry name" value="E3 UBIQUITIN-PROTEIN LIGASE HAKAI-RELATED"/>
    <property type="match status" value="1"/>
</dbReference>
<dbReference type="Pfam" id="PF18408">
    <property type="entry name" value="zf_Hakai"/>
    <property type="match status" value="1"/>
</dbReference>
<dbReference type="SUPFAM" id="SSF57850">
    <property type="entry name" value="RING/U-box"/>
    <property type="match status" value="1"/>
</dbReference>
<dbReference type="PROSITE" id="PS00518">
    <property type="entry name" value="ZF_RING_1"/>
    <property type="match status" value="1"/>
</dbReference>
<dbReference type="PROSITE" id="PS50089">
    <property type="entry name" value="ZF_RING_2"/>
    <property type="match status" value="1"/>
</dbReference>
<feature type="chain" id="PRO_0000284048" description="E3 ubiquitin-protein ligase Hakai">
    <location>
        <begin position="1"/>
        <end position="491"/>
    </location>
</feature>
<feature type="zinc finger region" description="RING-type" evidence="2">
    <location>
        <begin position="109"/>
        <end position="149"/>
    </location>
</feature>
<feature type="zinc finger region" description="C2H2-type">
    <location>
        <begin position="164"/>
        <end position="190"/>
    </location>
</feature>
<feature type="region of interest" description="Disordered" evidence="3">
    <location>
        <begin position="1"/>
        <end position="61"/>
    </location>
</feature>
<feature type="region of interest" description="HYB domain" evidence="1">
    <location>
        <begin position="148"/>
        <end position="206"/>
    </location>
</feature>
<feature type="region of interest" description="Disordered" evidence="3">
    <location>
        <begin position="255"/>
        <end position="491"/>
    </location>
</feature>
<feature type="compositionally biased region" description="Pro residues" evidence="3">
    <location>
        <begin position="342"/>
        <end position="359"/>
    </location>
</feature>
<feature type="compositionally biased region" description="Pro residues" evidence="3">
    <location>
        <begin position="372"/>
        <end position="389"/>
    </location>
</feature>
<feature type="compositionally biased region" description="Pro residues" evidence="3">
    <location>
        <begin position="399"/>
        <end position="423"/>
    </location>
</feature>
<feature type="compositionally biased region" description="Polar residues" evidence="3">
    <location>
        <begin position="427"/>
        <end position="442"/>
    </location>
</feature>
<feature type="compositionally biased region" description="Pro residues" evidence="3">
    <location>
        <begin position="457"/>
        <end position="478"/>
    </location>
</feature>
<feature type="modified residue" description="Phosphoserine" evidence="10">
    <location>
        <position position="201"/>
    </location>
</feature>
<feature type="modified residue" description="Phosphoserine" evidence="12">
    <location>
        <position position="285"/>
    </location>
</feature>
<feature type="modified residue" description="Phosphoserine" evidence="11">
    <location>
        <position position="290"/>
    </location>
</feature>
<feature type="splice variant" id="VSP_054879" description="In isoform 2." evidence="6">
    <location>
        <position position="60"/>
    </location>
</feature>
<feature type="sequence conflict" description="In Ref. 1; BAB15544." evidence="8" ref="1">
    <original>L</original>
    <variation>P</variation>
    <location>
        <position position="439"/>
    </location>
</feature>
<accession>Q75N03</accession>
<accession>B7ZM03</accession>
<accession>Q8TAJ4</accession>
<accession>Q9H5S6</accession>
<sequence length="491" mass="54519">MDHTDNELQGTNSSGSLGGLDVRRRIPIKLISKQANKAKPAPRTQRTINRMPAKAPPGDEEGFDYNEEERYDCKGGELFANQRRFPGHLFWDFQINILGEKDDTPVHFCDKCGLPIKIYGRMIPCKHVFCYDCAILHEKKGDKMCPGCSDPVQRIEQCTRGSLFMCSIVQGCKRTYLSQRDLQAHINHRHMRAGKPVTRASLENVHPPIAPPPTEIPERFIMPPDKHHMSHIPPKQHIMMPPPPLQHVPHEHYNQPHEDIRAPPAELSMAPPPPRSVSQETFRISTRKHSNLITVPIQDDSNSGAREPPPPAPAPAHHHPEYQGQPVVSHPHHIMPPQQHYAPPPPPPPPISHPMPHPPQAAGTPHLVYSQAPPPPMTSAPPPITPPPGHIIAQMPPYMNHPPPGPPPPQHGGPPVTAPPPHHYNPNSLPQFTEDQGTLSPPFTQPGGMSPGIWPAPRGPPPPPRLQGPPSQTPLPGPHHPDQTRYRPYYQ</sequence>
<name>HAKAI_HUMAN</name>
<evidence type="ECO:0000250" key="1">
    <source>
        <dbReference type="UniProtKB" id="Q9JIY2"/>
    </source>
</evidence>
<evidence type="ECO:0000255" key="2">
    <source>
        <dbReference type="PROSITE-ProRule" id="PRU00175"/>
    </source>
</evidence>
<evidence type="ECO:0000256" key="3">
    <source>
        <dbReference type="SAM" id="MobiDB-lite"/>
    </source>
</evidence>
<evidence type="ECO:0000269" key="4">
    <source>
    </source>
</evidence>
<evidence type="ECO:0000269" key="5">
    <source>
    </source>
</evidence>
<evidence type="ECO:0000303" key="6">
    <source>
    </source>
</evidence>
<evidence type="ECO:0000303" key="7">
    <source>
    </source>
</evidence>
<evidence type="ECO:0000305" key="8"/>
<evidence type="ECO:0000312" key="9">
    <source>
        <dbReference type="HGNC" id="HGNC:21225"/>
    </source>
</evidence>
<evidence type="ECO:0007744" key="10">
    <source>
    </source>
</evidence>
<evidence type="ECO:0007744" key="11">
    <source>
    </source>
</evidence>
<evidence type="ECO:0007744" key="12">
    <source>
    </source>
</evidence>